<feature type="chain" id="PRO_0000282874" description="Synaptosomal-associated protein 29">
    <location>
        <begin position="1"/>
        <end position="258"/>
    </location>
</feature>
<feature type="domain" description="t-SNARE coiled-coil homology" evidence="5">
    <location>
        <begin position="196"/>
        <end position="258"/>
    </location>
</feature>
<feature type="region of interest" description="Disordered" evidence="6">
    <location>
        <begin position="1"/>
        <end position="43"/>
    </location>
</feature>
<feature type="region of interest" description="Disordered" evidence="6">
    <location>
        <begin position="127"/>
        <end position="147"/>
    </location>
</feature>
<feature type="region of interest" description="Disordered" evidence="6">
    <location>
        <begin position="161"/>
        <end position="188"/>
    </location>
</feature>
<feature type="coiled-coil region" evidence="4">
    <location>
        <begin position="76"/>
        <end position="107"/>
    </location>
</feature>
<feature type="compositionally biased region" description="Polar residues" evidence="6">
    <location>
        <begin position="131"/>
        <end position="142"/>
    </location>
</feature>
<feature type="modified residue" description="Phosphoserine" evidence="2">
    <location>
        <position position="65"/>
    </location>
</feature>
<feature type="modified residue" description="Phosphoserine" evidence="1">
    <location>
        <position position="77"/>
    </location>
</feature>
<feature type="modified residue" description="Phosphoserine" evidence="1">
    <location>
        <position position="114"/>
    </location>
</feature>
<feature type="modified residue" description="Phosphothreonine" evidence="1">
    <location>
        <position position="130"/>
    </location>
</feature>
<feature type="modified residue" description="Phosphothreonine" evidence="1">
    <location>
        <position position="137"/>
    </location>
</feature>
<feature type="modified residue" description="Phosphoserine" evidence="1">
    <location>
        <position position="163"/>
    </location>
</feature>
<feature type="modified residue" description="Phosphoserine" evidence="1">
    <location>
        <position position="182"/>
    </location>
</feature>
<feature type="modified residue" description="Phosphoserine" evidence="1">
    <location>
        <position position="185"/>
    </location>
</feature>
<feature type="modified residue" description="Phosphoserine" evidence="1">
    <location>
        <position position="204"/>
    </location>
</feature>
<feature type="modified residue" description="Phosphoserine" evidence="1">
    <location>
        <position position="210"/>
    </location>
</feature>
<organism>
    <name type="scientific">Bos taurus</name>
    <name type="common">Bovine</name>
    <dbReference type="NCBI Taxonomy" id="9913"/>
    <lineage>
        <taxon>Eukaryota</taxon>
        <taxon>Metazoa</taxon>
        <taxon>Chordata</taxon>
        <taxon>Craniata</taxon>
        <taxon>Vertebrata</taxon>
        <taxon>Euteleostomi</taxon>
        <taxon>Mammalia</taxon>
        <taxon>Eutheria</taxon>
        <taxon>Laurasiatheria</taxon>
        <taxon>Artiodactyla</taxon>
        <taxon>Ruminantia</taxon>
        <taxon>Pecora</taxon>
        <taxon>Bovidae</taxon>
        <taxon>Bovinae</taxon>
        <taxon>Bos</taxon>
    </lineage>
</organism>
<evidence type="ECO:0000250" key="1">
    <source>
        <dbReference type="UniProtKB" id="O95721"/>
    </source>
</evidence>
<evidence type="ECO:0000250" key="2">
    <source>
        <dbReference type="UniProtKB" id="Q9ERB0"/>
    </source>
</evidence>
<evidence type="ECO:0000250" key="3">
    <source>
        <dbReference type="UniProtKB" id="Q9Z2P6"/>
    </source>
</evidence>
<evidence type="ECO:0000255" key="4"/>
<evidence type="ECO:0000255" key="5">
    <source>
        <dbReference type="PROSITE-ProRule" id="PRU00202"/>
    </source>
</evidence>
<evidence type="ECO:0000256" key="6">
    <source>
        <dbReference type="SAM" id="MobiDB-lite"/>
    </source>
</evidence>
<evidence type="ECO:0000305" key="7"/>
<dbReference type="EMBL" id="BC122755">
    <property type="protein sequence ID" value="AAI22756.1"/>
    <property type="molecule type" value="mRNA"/>
</dbReference>
<dbReference type="RefSeq" id="NP_001069427.1">
    <property type="nucleotide sequence ID" value="NM_001075959.1"/>
</dbReference>
<dbReference type="RefSeq" id="XP_024833094.1">
    <property type="nucleotide sequence ID" value="XM_024977326.2"/>
</dbReference>
<dbReference type="SMR" id="Q0II86"/>
<dbReference type="FunCoup" id="Q0II86">
    <property type="interactions" value="2969"/>
</dbReference>
<dbReference type="STRING" id="9913.ENSBTAP00000027666"/>
<dbReference type="PaxDb" id="9913-ENSBTAP00000027666"/>
<dbReference type="PeptideAtlas" id="Q0II86"/>
<dbReference type="GeneID" id="532261"/>
<dbReference type="KEGG" id="bta:532261"/>
<dbReference type="CTD" id="9342"/>
<dbReference type="VEuPathDB" id="HostDB:ENSBTAG00000020760"/>
<dbReference type="eggNOG" id="KOG3065">
    <property type="taxonomic scope" value="Eukaryota"/>
</dbReference>
<dbReference type="HOGENOM" id="CLU_069907_1_0_1"/>
<dbReference type="InParanoid" id="Q0II86"/>
<dbReference type="OMA" id="NLDEMCD"/>
<dbReference type="OrthoDB" id="18679at2759"/>
<dbReference type="TreeFam" id="TF320226"/>
<dbReference type="Reactome" id="R-BTA-6798695">
    <property type="pathway name" value="Neutrophil degranulation"/>
</dbReference>
<dbReference type="Reactome" id="R-BTA-6811438">
    <property type="pathway name" value="Intra-Golgi traffic"/>
</dbReference>
<dbReference type="Proteomes" id="UP000009136">
    <property type="component" value="Chromosome 17"/>
</dbReference>
<dbReference type="Bgee" id="ENSBTAG00000020760">
    <property type="expression patterns" value="Expressed in spermatid and 109 other cell types or tissues"/>
</dbReference>
<dbReference type="GO" id="GO:0005776">
    <property type="term" value="C:autophagosome"/>
    <property type="evidence" value="ECO:0000250"/>
    <property type="project" value="UniProtKB"/>
</dbReference>
<dbReference type="GO" id="GO:0000421">
    <property type="term" value="C:autophagosome membrane"/>
    <property type="evidence" value="ECO:0007669"/>
    <property type="project" value="UniProtKB-SubCell"/>
</dbReference>
<dbReference type="GO" id="GO:0005813">
    <property type="term" value="C:centrosome"/>
    <property type="evidence" value="ECO:0007669"/>
    <property type="project" value="Ensembl"/>
</dbReference>
<dbReference type="GO" id="GO:0020018">
    <property type="term" value="C:ciliary pocket membrane"/>
    <property type="evidence" value="ECO:0000250"/>
    <property type="project" value="UniProtKB"/>
</dbReference>
<dbReference type="GO" id="GO:0031410">
    <property type="term" value="C:cytoplasmic vesicle"/>
    <property type="evidence" value="ECO:0007669"/>
    <property type="project" value="UniProtKB-KW"/>
</dbReference>
<dbReference type="GO" id="GO:0005829">
    <property type="term" value="C:cytosol"/>
    <property type="evidence" value="ECO:0007669"/>
    <property type="project" value="Ensembl"/>
</dbReference>
<dbReference type="GO" id="GO:0000139">
    <property type="term" value="C:Golgi membrane"/>
    <property type="evidence" value="ECO:0007669"/>
    <property type="project" value="UniProtKB-SubCell"/>
</dbReference>
<dbReference type="GO" id="GO:0005886">
    <property type="term" value="C:plasma membrane"/>
    <property type="evidence" value="ECO:0000318"/>
    <property type="project" value="GO_Central"/>
</dbReference>
<dbReference type="GO" id="GO:0098793">
    <property type="term" value="C:presynapse"/>
    <property type="evidence" value="ECO:0007669"/>
    <property type="project" value="GOC"/>
</dbReference>
<dbReference type="GO" id="GO:0031201">
    <property type="term" value="C:SNARE complex"/>
    <property type="evidence" value="ECO:0000250"/>
    <property type="project" value="UniProtKB"/>
</dbReference>
<dbReference type="GO" id="GO:0005484">
    <property type="term" value="F:SNAP receptor activity"/>
    <property type="evidence" value="ECO:0000318"/>
    <property type="project" value="GO_Central"/>
</dbReference>
<dbReference type="GO" id="GO:0019905">
    <property type="term" value="F:syntaxin binding"/>
    <property type="evidence" value="ECO:0000318"/>
    <property type="project" value="GO_Central"/>
</dbReference>
<dbReference type="GO" id="GO:0097352">
    <property type="term" value="P:autophagosome maturation"/>
    <property type="evidence" value="ECO:0000250"/>
    <property type="project" value="UniProtKB"/>
</dbReference>
<dbReference type="GO" id="GO:0016240">
    <property type="term" value="P:autophagosome membrane docking"/>
    <property type="evidence" value="ECO:0007669"/>
    <property type="project" value="Ensembl"/>
</dbReference>
<dbReference type="GO" id="GO:0060271">
    <property type="term" value="P:cilium assembly"/>
    <property type="evidence" value="ECO:0000250"/>
    <property type="project" value="UniProtKB"/>
</dbReference>
<dbReference type="GO" id="GO:0006887">
    <property type="term" value="P:exocytosis"/>
    <property type="evidence" value="ECO:0000318"/>
    <property type="project" value="GO_Central"/>
</dbReference>
<dbReference type="GO" id="GO:0015031">
    <property type="term" value="P:protein transport"/>
    <property type="evidence" value="ECO:0007669"/>
    <property type="project" value="UniProtKB-KW"/>
</dbReference>
<dbReference type="GO" id="GO:0031629">
    <property type="term" value="P:synaptic vesicle fusion to presynaptic active zone membrane"/>
    <property type="evidence" value="ECO:0000318"/>
    <property type="project" value="GO_Central"/>
</dbReference>
<dbReference type="GO" id="GO:0016082">
    <property type="term" value="P:synaptic vesicle priming"/>
    <property type="evidence" value="ECO:0000318"/>
    <property type="project" value="GO_Central"/>
</dbReference>
<dbReference type="CDD" id="cd15856">
    <property type="entry name" value="SNARE_SNAP29C"/>
    <property type="match status" value="1"/>
</dbReference>
<dbReference type="CDD" id="cd15887">
    <property type="entry name" value="SNARE_SNAP29N"/>
    <property type="match status" value="1"/>
</dbReference>
<dbReference type="FunFam" id="1.20.5.110:FF:000041">
    <property type="entry name" value="Synaptosomal-associated protein 29"/>
    <property type="match status" value="1"/>
</dbReference>
<dbReference type="FunFam" id="1.20.5.110:FF:000051">
    <property type="entry name" value="synaptosomal-associated protein 29"/>
    <property type="match status" value="1"/>
</dbReference>
<dbReference type="Gene3D" id="1.20.5.110">
    <property type="match status" value="2"/>
</dbReference>
<dbReference type="InterPro" id="IPR000727">
    <property type="entry name" value="T_SNARE_dom"/>
</dbReference>
<dbReference type="PANTHER" id="PTHR19305">
    <property type="entry name" value="SYNAPTOSOMAL ASSOCIATED PROTEIN"/>
    <property type="match status" value="1"/>
</dbReference>
<dbReference type="PANTHER" id="PTHR19305:SF9">
    <property type="entry name" value="SYNAPTOSOMAL-ASSOCIATED PROTEIN 29"/>
    <property type="match status" value="1"/>
</dbReference>
<dbReference type="SMART" id="SM00397">
    <property type="entry name" value="t_SNARE"/>
    <property type="match status" value="2"/>
</dbReference>
<dbReference type="SUPFAM" id="SSF58038">
    <property type="entry name" value="SNARE fusion complex"/>
    <property type="match status" value="2"/>
</dbReference>
<dbReference type="PROSITE" id="PS50192">
    <property type="entry name" value="T_SNARE"/>
    <property type="match status" value="1"/>
</dbReference>
<accession>Q0II86</accession>
<keyword id="KW-0072">Autophagy</keyword>
<keyword id="KW-1003">Cell membrane</keyword>
<keyword id="KW-0966">Cell projection</keyword>
<keyword id="KW-0969">Cilium</keyword>
<keyword id="KW-0970">Cilium biogenesis/degradation</keyword>
<keyword id="KW-0175">Coiled coil</keyword>
<keyword id="KW-0963">Cytoplasm</keyword>
<keyword id="KW-0968">Cytoplasmic vesicle</keyword>
<keyword id="KW-0333">Golgi apparatus</keyword>
<keyword id="KW-0472">Membrane</keyword>
<keyword id="KW-0597">Phosphoprotein</keyword>
<keyword id="KW-0653">Protein transport</keyword>
<keyword id="KW-1185">Reference proteome</keyword>
<keyword id="KW-0813">Transport</keyword>
<protein>
    <recommendedName>
        <fullName evidence="1">Synaptosomal-associated protein 29</fullName>
        <shortName evidence="1">SNAP-29</shortName>
    </recommendedName>
    <alternativeName>
        <fullName evidence="1">Soluble 29 kDa NSF attachment protein</fullName>
    </alternativeName>
    <alternativeName>
        <fullName>Vesicle-membrane fusion protein SNAP-29</fullName>
    </alternativeName>
</protein>
<comment type="function">
    <text evidence="1">SNAREs, soluble N-ethylmaleimide-sensitive factor-attachment protein receptors, are essential proteins for fusion of cellular membranes. SNAREs localized on opposing membranes assemble to form a trans-SNARE complex, an extended, parallel four alpha-helical bundle that drives membrane fusion. SNAP29 is a SNARE involved in autophagy through the direct control of autophagosome membrane fusion with the lysososome membrane. Also plays a role in ciliogenesis by regulating membrane fusions.</text>
</comment>
<comment type="subunit">
    <text evidence="1 3">Forms a SNARE complex, composed of VAMP8, SNAP29 and STX17, involved in fusion of autophagosome with lysosome (By similarity). Interacts with multiple syntaxins including STX6 (By similarity). Interacts with EIPR1 (By similarity). Interacts with STX17; this interaction is increased in the absence of TMEM39A (By similarity).</text>
</comment>
<comment type="subcellular location">
    <subcellularLocation>
        <location evidence="1">Cytoplasm</location>
    </subcellularLocation>
    <subcellularLocation>
        <location evidence="3">Golgi apparatus membrane</location>
        <topology evidence="1">Peripheral membrane protein</topology>
    </subcellularLocation>
    <subcellularLocation>
        <location evidence="1">Cytoplasmic vesicle</location>
        <location evidence="1">Autophagosome membrane</location>
        <topology evidence="1">Peripheral membrane protein</topology>
    </subcellularLocation>
    <subcellularLocation>
        <location evidence="1">Cell projection</location>
        <location evidence="1">Cilium membrane</location>
        <topology evidence="1">Peripheral membrane protein</topology>
    </subcellularLocation>
    <text evidence="1">Appears to be mostly membrane-bound, probably via interaction with syntaxins, but a significant portion is cytoplasmic. Localizes to the ciliary pocket from where the cilium protrudes.</text>
</comment>
<comment type="similarity">
    <text evidence="7">Belongs to the SNAP-25 family.</text>
</comment>
<proteinExistence type="evidence at transcript level"/>
<name>SNP29_BOVIN</name>
<reference key="1">
    <citation type="submission" date="2006-08" db="EMBL/GenBank/DDBJ databases">
        <authorList>
            <consortium name="NIH - Mammalian Gene Collection (MGC) project"/>
        </authorList>
    </citation>
    <scope>NUCLEOTIDE SEQUENCE [LARGE SCALE MRNA]</scope>
    <source>
        <strain>Crossbred X Angus</strain>
        <tissue>Liver</tissue>
    </source>
</reference>
<gene>
    <name evidence="1" type="primary">SNAP29</name>
</gene>
<sequence length="258" mass="28490">MSAYPRSYNPFDEDAEDEDARPAPWSDSRDLADGPGAPADRQQALRQEVLRRAEATAASTGRSLSLMYESERIGVVSAEELVRQRGALERTEKMVDKMEQDLKTSQKHINSIKSVFGGLVNYFRSKPAETPSAQNGTLTPQPSGRLKDAINSSKEQEAQYQASHPNLRKLQDSDSIPGGAGSAVSSEAYPRNPHLRACHQRIDSNLDELSVGLGRLKDIALGIQTEIDEQDDILDRLTSKVDKLDVSITSTERKVRQL</sequence>